<keyword id="KW-1003">Cell membrane</keyword>
<keyword id="KW-0472">Membrane</keyword>
<keyword id="KW-1185">Reference proteome</keyword>
<keyword id="KW-0812">Transmembrane</keyword>
<keyword id="KW-1133">Transmembrane helix</keyword>
<keyword id="KW-0813">Transport</keyword>
<reference key="1">
    <citation type="journal article" date="1998" name="Nature">
        <title>Deciphering the biology of Mycobacterium tuberculosis from the complete genome sequence.</title>
        <authorList>
            <person name="Cole S.T."/>
            <person name="Brosch R."/>
            <person name="Parkhill J."/>
            <person name="Garnier T."/>
            <person name="Churcher C.M."/>
            <person name="Harris D.E."/>
            <person name="Gordon S.V."/>
            <person name="Eiglmeier K."/>
            <person name="Gas S."/>
            <person name="Barry C.E. III"/>
            <person name="Tekaia F."/>
            <person name="Badcock K."/>
            <person name="Basham D."/>
            <person name="Brown D."/>
            <person name="Chillingworth T."/>
            <person name="Connor R."/>
            <person name="Davies R.M."/>
            <person name="Devlin K."/>
            <person name="Feltwell T."/>
            <person name="Gentles S."/>
            <person name="Hamlin N."/>
            <person name="Holroyd S."/>
            <person name="Hornsby T."/>
            <person name="Jagels K."/>
            <person name="Krogh A."/>
            <person name="McLean J."/>
            <person name="Moule S."/>
            <person name="Murphy L.D."/>
            <person name="Oliver S."/>
            <person name="Osborne J."/>
            <person name="Quail M.A."/>
            <person name="Rajandream M.A."/>
            <person name="Rogers J."/>
            <person name="Rutter S."/>
            <person name="Seeger K."/>
            <person name="Skelton S."/>
            <person name="Squares S."/>
            <person name="Squares R."/>
            <person name="Sulston J.E."/>
            <person name="Taylor K."/>
            <person name="Whitehead S."/>
            <person name="Barrell B.G."/>
        </authorList>
    </citation>
    <scope>NUCLEOTIDE SEQUENCE [LARGE SCALE GENOMIC DNA]</scope>
    <source>
        <strain>ATCC 25618 / H37Rv</strain>
    </source>
</reference>
<accession>P9WPR7</accession>
<accession>L0T559</accession>
<accession>O05909</accession>
<accession>P63695</accession>
<gene>
    <name type="ordered locus">Rv0917</name>
    <name type="ORF">MTCY21C12.11</name>
</gene>
<sequence length="593" mass="63869">MSAKERGDQNAVVDALRSIQPAVFIPASVVIVAMIVVSVVYSSVAENAFVRLNSAITGGVGWWYILVATGFVVFALYCGISRIGTIRLGRDDELPEFSFWAWLAMLFSAGMGIGLVFYGVAEPLSHYLRPPRSRGVPALTDAAANQAMALTVFHWGLHAWAIYVVVGLGMAYMTYRRGRPLSVRWLLEPVVGRGRVEGALGHAVDVIAIVGTLFGVATSLGFGITQIASGLEYLGWIRVDNWWMVGMIAAITATATASVVSGVSKGLKWLSNINMALAAALALFVLLLGPTLFLLQSWVQNLGGYVQSLPQFMLRTAPFSHDGWLGDWTIFYWGWWISWAPFVGMFIARISRGRTIREFIGAVLLVPTVIASLWFTIFGDSALLRQRNNGDMLVNGAVDTNTSLFRLLDGLPIGAITSVLAVLVIVFFFVTSSDSGSLVIDILSAGGELDPPKLTRVYWAVLEGVAAAVLLLIGGAGSLTALRTAAIATALPFSIVMVVACYAMTKAFHFDLAATPRLLHVTVPDVVAAGNRRRHDISATLSGLIAVRDVDSGTYIVHPDTGALTVTAPPDPLDDHVFESDRHVTRRNTTSSR</sequence>
<feature type="chain" id="PRO_0000201497" description="Uncharacterized transporter Rv0917">
    <location>
        <begin position="1"/>
        <end position="593"/>
    </location>
</feature>
<feature type="transmembrane region" description="Helical" evidence="1">
    <location>
        <begin position="21"/>
        <end position="41"/>
    </location>
</feature>
<feature type="transmembrane region" description="Helical" evidence="1">
    <location>
        <begin position="60"/>
        <end position="80"/>
    </location>
</feature>
<feature type="transmembrane region" description="Helical" evidence="1">
    <location>
        <begin position="97"/>
        <end position="117"/>
    </location>
</feature>
<feature type="transmembrane region" description="Helical" evidence="1">
    <location>
        <begin position="148"/>
        <end position="168"/>
    </location>
</feature>
<feature type="transmembrane region" description="Helical" evidence="1">
    <location>
        <begin position="204"/>
        <end position="224"/>
    </location>
</feature>
<feature type="transmembrane region" description="Helical" evidence="1">
    <location>
        <begin position="243"/>
        <end position="263"/>
    </location>
</feature>
<feature type="transmembrane region" description="Helical" evidence="1">
    <location>
        <begin position="275"/>
        <end position="295"/>
    </location>
</feature>
<feature type="transmembrane region" description="Helical" evidence="1">
    <location>
        <begin position="328"/>
        <end position="348"/>
    </location>
</feature>
<feature type="transmembrane region" description="Helical" evidence="1">
    <location>
        <begin position="359"/>
        <end position="379"/>
    </location>
</feature>
<feature type="transmembrane region" description="Helical" evidence="1">
    <location>
        <begin position="410"/>
        <end position="430"/>
    </location>
</feature>
<feature type="transmembrane region" description="Helical" evidence="1">
    <location>
        <begin position="457"/>
        <end position="477"/>
    </location>
</feature>
<feature type="transmembrane region" description="Helical" evidence="1">
    <location>
        <begin position="485"/>
        <end position="505"/>
    </location>
</feature>
<comment type="subcellular location">
    <subcellularLocation>
        <location evidence="2">Cell membrane</location>
        <topology evidence="2">Multi-pass membrane protein</topology>
    </subcellularLocation>
</comment>
<comment type="similarity">
    <text evidence="2">Belongs to the BCCT transporter (TC 2.A.15) family.</text>
</comment>
<organism>
    <name type="scientific">Mycobacterium tuberculosis (strain ATCC 25618 / H37Rv)</name>
    <dbReference type="NCBI Taxonomy" id="83332"/>
    <lineage>
        <taxon>Bacteria</taxon>
        <taxon>Bacillati</taxon>
        <taxon>Actinomycetota</taxon>
        <taxon>Actinomycetes</taxon>
        <taxon>Mycobacteriales</taxon>
        <taxon>Mycobacteriaceae</taxon>
        <taxon>Mycobacterium</taxon>
        <taxon>Mycobacterium tuberculosis complex</taxon>
    </lineage>
</organism>
<proteinExistence type="inferred from homology"/>
<dbReference type="EMBL" id="AL123456">
    <property type="protein sequence ID" value="CCP43665.1"/>
    <property type="molecule type" value="Genomic_DNA"/>
</dbReference>
<dbReference type="PIR" id="E70582">
    <property type="entry name" value="E70582"/>
</dbReference>
<dbReference type="RefSeq" id="WP_003404749.1">
    <property type="nucleotide sequence ID" value="NZ_NVQJ01000001.1"/>
</dbReference>
<dbReference type="SMR" id="P9WPR7"/>
<dbReference type="FunCoup" id="P9WPR7">
    <property type="interactions" value="2"/>
</dbReference>
<dbReference type="STRING" id="83332.Rv0917"/>
<dbReference type="PaxDb" id="83332-Rv0917"/>
<dbReference type="DNASU" id="885172"/>
<dbReference type="KEGG" id="mtu:Rv0917"/>
<dbReference type="KEGG" id="mtv:RVBD_0917"/>
<dbReference type="TubercuList" id="Rv0917"/>
<dbReference type="eggNOG" id="COG1292">
    <property type="taxonomic scope" value="Bacteria"/>
</dbReference>
<dbReference type="InParanoid" id="P9WPR7"/>
<dbReference type="OrthoDB" id="9775735at2"/>
<dbReference type="PhylomeDB" id="P9WPR7"/>
<dbReference type="Proteomes" id="UP000001584">
    <property type="component" value="Chromosome"/>
</dbReference>
<dbReference type="GO" id="GO:0005576">
    <property type="term" value="C:extracellular region"/>
    <property type="evidence" value="ECO:0007005"/>
    <property type="project" value="MTBBASE"/>
</dbReference>
<dbReference type="GO" id="GO:0005886">
    <property type="term" value="C:plasma membrane"/>
    <property type="evidence" value="ECO:0000318"/>
    <property type="project" value="GO_Central"/>
</dbReference>
<dbReference type="GO" id="GO:0022857">
    <property type="term" value="F:transmembrane transporter activity"/>
    <property type="evidence" value="ECO:0000318"/>
    <property type="project" value="GO_Central"/>
</dbReference>
<dbReference type="InterPro" id="IPR018093">
    <property type="entry name" value="BCCT_CS"/>
</dbReference>
<dbReference type="InterPro" id="IPR000060">
    <property type="entry name" value="BCCT_transptr"/>
</dbReference>
<dbReference type="NCBIfam" id="TIGR00842">
    <property type="entry name" value="bcct"/>
    <property type="match status" value="1"/>
</dbReference>
<dbReference type="PANTHER" id="PTHR30047:SF7">
    <property type="entry name" value="HIGH-AFFINITY CHOLINE TRANSPORT PROTEIN"/>
    <property type="match status" value="1"/>
</dbReference>
<dbReference type="PANTHER" id="PTHR30047">
    <property type="entry name" value="HIGH-AFFINITY CHOLINE TRANSPORT PROTEIN-RELATED"/>
    <property type="match status" value="1"/>
</dbReference>
<dbReference type="Pfam" id="PF02028">
    <property type="entry name" value="BCCT"/>
    <property type="match status" value="1"/>
</dbReference>
<dbReference type="PROSITE" id="PS01303">
    <property type="entry name" value="BCCT"/>
    <property type="match status" value="1"/>
</dbReference>
<evidence type="ECO:0000255" key="1"/>
<evidence type="ECO:0000305" key="2"/>
<name>Y917_MYCTU</name>
<protein>
    <recommendedName>
        <fullName>Uncharacterized transporter Rv0917</fullName>
    </recommendedName>
</protein>